<feature type="chain" id="PRO_0000152238" description="NH(3)-dependent NAD(+) synthetase">
    <location>
        <begin position="1"/>
        <end position="242"/>
    </location>
</feature>
<feature type="binding site" evidence="1">
    <location>
        <begin position="27"/>
        <end position="34"/>
    </location>
    <ligand>
        <name>ATP</name>
        <dbReference type="ChEBI" id="CHEBI:30616"/>
    </ligand>
</feature>
<feature type="binding site" evidence="1">
    <location>
        <position position="33"/>
    </location>
    <ligand>
        <name>Mg(2+)</name>
        <dbReference type="ChEBI" id="CHEBI:18420"/>
    </ligand>
</feature>
<feature type="binding site" evidence="1">
    <location>
        <position position="109"/>
    </location>
    <ligand>
        <name>deamido-NAD(+)</name>
        <dbReference type="ChEBI" id="CHEBI:58437"/>
    </ligand>
</feature>
<feature type="binding site" evidence="1">
    <location>
        <position position="129"/>
    </location>
    <ligand>
        <name>ATP</name>
        <dbReference type="ChEBI" id="CHEBI:30616"/>
    </ligand>
</feature>
<feature type="binding site" evidence="1">
    <location>
        <position position="134"/>
    </location>
    <ligand>
        <name>Mg(2+)</name>
        <dbReference type="ChEBI" id="CHEBI:18420"/>
    </ligand>
</feature>
<feature type="binding site" evidence="1">
    <location>
        <position position="142"/>
    </location>
    <ligand>
        <name>deamido-NAD(+)</name>
        <dbReference type="ChEBI" id="CHEBI:58437"/>
    </ligand>
</feature>
<feature type="binding site" evidence="1">
    <location>
        <position position="149"/>
    </location>
    <ligand>
        <name>deamido-NAD(+)</name>
        <dbReference type="ChEBI" id="CHEBI:58437"/>
    </ligand>
</feature>
<feature type="binding site" evidence="1">
    <location>
        <position position="158"/>
    </location>
    <ligand>
        <name>ATP</name>
        <dbReference type="ChEBI" id="CHEBI:30616"/>
    </ligand>
</feature>
<feature type="binding site" evidence="1">
    <location>
        <position position="180"/>
    </location>
    <ligand>
        <name>ATP</name>
        <dbReference type="ChEBI" id="CHEBI:30616"/>
    </ligand>
</feature>
<feature type="binding site" evidence="1">
    <location>
        <begin position="231"/>
        <end position="232"/>
    </location>
    <ligand>
        <name>deamido-NAD(+)</name>
        <dbReference type="ChEBI" id="CHEBI:58437"/>
    </ligand>
</feature>
<proteinExistence type="inferred from homology"/>
<protein>
    <recommendedName>
        <fullName evidence="1">NH(3)-dependent NAD(+) synthetase</fullName>
        <ecNumber evidence="1">6.3.1.5</ecNumber>
    </recommendedName>
</protein>
<name>NADE_THEVO</name>
<organism>
    <name type="scientific">Thermoplasma volcanium (strain ATCC 51530 / DSM 4299 / JCM 9571 / NBRC 15438 / GSS1)</name>
    <dbReference type="NCBI Taxonomy" id="273116"/>
    <lineage>
        <taxon>Archaea</taxon>
        <taxon>Methanobacteriati</taxon>
        <taxon>Thermoplasmatota</taxon>
        <taxon>Thermoplasmata</taxon>
        <taxon>Thermoplasmatales</taxon>
        <taxon>Thermoplasmataceae</taxon>
        <taxon>Thermoplasma</taxon>
    </lineage>
</organism>
<reference key="1">
    <citation type="journal article" date="2000" name="Proc. Natl. Acad. Sci. U.S.A.">
        <title>Archaeal adaptation to higher temperatures revealed by genomic sequence of Thermoplasma volcanium.</title>
        <authorList>
            <person name="Kawashima T."/>
            <person name="Amano N."/>
            <person name="Koike H."/>
            <person name="Makino S."/>
            <person name="Higuchi S."/>
            <person name="Kawashima-Ohya Y."/>
            <person name="Watanabe K."/>
            <person name="Yamazaki M."/>
            <person name="Kanehori K."/>
            <person name="Kawamoto T."/>
            <person name="Nunoshiba T."/>
            <person name="Yamamoto Y."/>
            <person name="Aramaki H."/>
            <person name="Makino K."/>
            <person name="Suzuki M."/>
        </authorList>
    </citation>
    <scope>NUCLEOTIDE SEQUENCE [LARGE SCALE GENOMIC DNA]</scope>
    <source>
        <strain>ATCC 51530 / DSM 4299 / JCM 9571 / NBRC 15438 / GSS1</strain>
    </source>
</reference>
<accession>Q979W4</accession>
<evidence type="ECO:0000255" key="1">
    <source>
        <dbReference type="HAMAP-Rule" id="MF_00193"/>
    </source>
</evidence>
<keyword id="KW-0067">ATP-binding</keyword>
<keyword id="KW-0436">Ligase</keyword>
<keyword id="KW-0460">Magnesium</keyword>
<keyword id="KW-0479">Metal-binding</keyword>
<keyword id="KW-0520">NAD</keyword>
<keyword id="KW-0547">Nucleotide-binding</keyword>
<dbReference type="EC" id="6.3.1.5" evidence="1"/>
<dbReference type="EMBL" id="BA000011">
    <property type="protein sequence ID" value="BAB60188.1"/>
    <property type="molecule type" value="Genomic_DNA"/>
</dbReference>
<dbReference type="RefSeq" id="WP_010917275.1">
    <property type="nucleotide sequence ID" value="NC_002689.2"/>
</dbReference>
<dbReference type="SMR" id="Q979W4"/>
<dbReference type="STRING" id="273116.gene:9381840"/>
<dbReference type="PaxDb" id="273116-14325284"/>
<dbReference type="GeneID" id="1441157"/>
<dbReference type="KEGG" id="tvo:TVG1071522"/>
<dbReference type="eggNOG" id="arCOG00069">
    <property type="taxonomic scope" value="Archaea"/>
</dbReference>
<dbReference type="HOGENOM" id="CLU_059327_1_1_2"/>
<dbReference type="OrthoDB" id="39312at2157"/>
<dbReference type="PhylomeDB" id="Q979W4"/>
<dbReference type="UniPathway" id="UPA00253">
    <property type="reaction ID" value="UER00333"/>
</dbReference>
<dbReference type="Proteomes" id="UP000001017">
    <property type="component" value="Chromosome"/>
</dbReference>
<dbReference type="GO" id="GO:0005737">
    <property type="term" value="C:cytoplasm"/>
    <property type="evidence" value="ECO:0007669"/>
    <property type="project" value="InterPro"/>
</dbReference>
<dbReference type="GO" id="GO:0005524">
    <property type="term" value="F:ATP binding"/>
    <property type="evidence" value="ECO:0007669"/>
    <property type="project" value="UniProtKB-UniRule"/>
</dbReference>
<dbReference type="GO" id="GO:0004359">
    <property type="term" value="F:glutaminase activity"/>
    <property type="evidence" value="ECO:0007669"/>
    <property type="project" value="InterPro"/>
</dbReference>
<dbReference type="GO" id="GO:0046872">
    <property type="term" value="F:metal ion binding"/>
    <property type="evidence" value="ECO:0007669"/>
    <property type="project" value="UniProtKB-KW"/>
</dbReference>
<dbReference type="GO" id="GO:0003952">
    <property type="term" value="F:NAD+ synthase (glutamine-hydrolyzing) activity"/>
    <property type="evidence" value="ECO:0007669"/>
    <property type="project" value="InterPro"/>
</dbReference>
<dbReference type="GO" id="GO:0008795">
    <property type="term" value="F:NAD+ synthase activity"/>
    <property type="evidence" value="ECO:0007669"/>
    <property type="project" value="UniProtKB-UniRule"/>
</dbReference>
<dbReference type="GO" id="GO:0009435">
    <property type="term" value="P:NAD biosynthetic process"/>
    <property type="evidence" value="ECO:0007669"/>
    <property type="project" value="UniProtKB-UniRule"/>
</dbReference>
<dbReference type="CDD" id="cd00553">
    <property type="entry name" value="NAD_synthase"/>
    <property type="match status" value="1"/>
</dbReference>
<dbReference type="Gene3D" id="3.40.50.620">
    <property type="entry name" value="HUPs"/>
    <property type="match status" value="1"/>
</dbReference>
<dbReference type="HAMAP" id="MF_00193">
    <property type="entry name" value="NadE_ammonia_dep"/>
    <property type="match status" value="1"/>
</dbReference>
<dbReference type="InterPro" id="IPR022310">
    <property type="entry name" value="NAD/GMP_synthase"/>
</dbReference>
<dbReference type="InterPro" id="IPR003694">
    <property type="entry name" value="NAD_synthase"/>
</dbReference>
<dbReference type="InterPro" id="IPR022926">
    <property type="entry name" value="NH(3)-dep_NAD(+)_synth"/>
</dbReference>
<dbReference type="InterPro" id="IPR014729">
    <property type="entry name" value="Rossmann-like_a/b/a_fold"/>
</dbReference>
<dbReference type="NCBIfam" id="TIGR00552">
    <property type="entry name" value="nadE"/>
    <property type="match status" value="1"/>
</dbReference>
<dbReference type="NCBIfam" id="NF010587">
    <property type="entry name" value="PRK13980.1"/>
    <property type="match status" value="1"/>
</dbReference>
<dbReference type="PANTHER" id="PTHR23090:SF9">
    <property type="entry name" value="GLUTAMINE-DEPENDENT NAD(+) SYNTHETASE"/>
    <property type="match status" value="1"/>
</dbReference>
<dbReference type="PANTHER" id="PTHR23090">
    <property type="entry name" value="NH 3 /GLUTAMINE-DEPENDENT NAD + SYNTHETASE"/>
    <property type="match status" value="1"/>
</dbReference>
<dbReference type="Pfam" id="PF02540">
    <property type="entry name" value="NAD_synthase"/>
    <property type="match status" value="1"/>
</dbReference>
<dbReference type="SUPFAM" id="SSF52402">
    <property type="entry name" value="Adenine nucleotide alpha hydrolases-like"/>
    <property type="match status" value="1"/>
</dbReference>
<comment type="function">
    <text evidence="1">Catalyzes the ATP-dependent amidation of deamido-NAD to form NAD. Uses ammonia as a nitrogen source.</text>
</comment>
<comment type="catalytic activity">
    <reaction evidence="1">
        <text>deamido-NAD(+) + NH4(+) + ATP = AMP + diphosphate + NAD(+) + H(+)</text>
        <dbReference type="Rhea" id="RHEA:21188"/>
        <dbReference type="ChEBI" id="CHEBI:15378"/>
        <dbReference type="ChEBI" id="CHEBI:28938"/>
        <dbReference type="ChEBI" id="CHEBI:30616"/>
        <dbReference type="ChEBI" id="CHEBI:33019"/>
        <dbReference type="ChEBI" id="CHEBI:57540"/>
        <dbReference type="ChEBI" id="CHEBI:58437"/>
        <dbReference type="ChEBI" id="CHEBI:456215"/>
        <dbReference type="EC" id="6.3.1.5"/>
    </reaction>
</comment>
<comment type="pathway">
    <text evidence="1">Cofactor biosynthesis; NAD(+) biosynthesis; NAD(+) from deamido-NAD(+) (ammonia route): step 1/1.</text>
</comment>
<comment type="subunit">
    <text evidence="1">Homodimer.</text>
</comment>
<comment type="similarity">
    <text evidence="1">Belongs to the NAD synthetase family.</text>
</comment>
<sequence length="242" mass="27227">MPDYQKEIERIGEFLRKIIADRKAVIGISGGIDSSVTLGILSKFFLHENIKAVFMPDATTPKSDYDDVDVLASTFGVKYSTVNIQNIVDTFSKTLSAVDKGAIGNIKSRIRMIVLYYFANIYNGIVVGTTNRTELLLGYYTKYGDGGCDVEPIEHLYKRDIYEIARLLGVPESIIKKKPTAGLWQGQTDEDEIGMPYSKIDDILSSIFDKGELREDPDFKKILDLHSKSDHKRRLPYSLSPD</sequence>
<gene>
    <name evidence="1" type="primary">nadE</name>
    <name type="ordered locus">TV1046</name>
    <name type="ORF">TVG1071522</name>
</gene>